<reference key="1">
    <citation type="journal article" date="2004" name="Science">
        <title>The Ashbya gossypii genome as a tool for mapping the ancient Saccharomyces cerevisiae genome.</title>
        <authorList>
            <person name="Dietrich F.S."/>
            <person name="Voegeli S."/>
            <person name="Brachat S."/>
            <person name="Lerch A."/>
            <person name="Gates K."/>
            <person name="Steiner S."/>
            <person name="Mohr C."/>
            <person name="Poehlmann R."/>
            <person name="Luedi P."/>
            <person name="Choi S."/>
            <person name="Wing R.A."/>
            <person name="Flavier A."/>
            <person name="Gaffney T.D."/>
            <person name="Philippsen P."/>
        </authorList>
    </citation>
    <scope>NUCLEOTIDE SEQUENCE [LARGE SCALE GENOMIC DNA]</scope>
    <source>
        <strain>ATCC 10895 / CBS 109.51 / FGSC 9923 / NRRL Y-1056</strain>
    </source>
</reference>
<reference key="2">
    <citation type="journal article" date="2013" name="G3 (Bethesda)">
        <title>Genomes of Ashbya fungi isolated from insects reveal four mating-type loci, numerous translocations, lack of transposons, and distinct gene duplications.</title>
        <authorList>
            <person name="Dietrich F.S."/>
            <person name="Voegeli S."/>
            <person name="Kuo S."/>
            <person name="Philippsen P."/>
        </authorList>
    </citation>
    <scope>GENOME REANNOTATION</scope>
    <source>
        <strain>ATCC 10895 / CBS 109.51 / FGSC 9923 / NRRL Y-1056</strain>
    </source>
</reference>
<sequence length="659" mass="71590">MAMESECNVVELIGGFFLKATLLVCQPRTGAIEGDGEEDRTFNISSAADAGVAEAVRAWTAYDGAQELPPLVIEMFLDLRRLGPQHTVVLKDQDGNPWNVCKGGKKSEIMLERWLVELDVGNEEARPEEPPNAAEIYKQLVLLFRYLYTLTQLLPANELYARLHGPSNQGEAAMPLINIGTRILDGSKPILSKGRVGLSRSIIATYTNVINETNVASHLEQKKITPISTGYGSLRITVSYRRDCNFDVNEVLDYEGNNCSSSSVVDTHTKPGVGPLSSLRRVSIHSNRSMSISPQTVYSGTVIPDPSPQRKSSSSRIQPFKAGSVGSGSLAIARNPSGSSAVATLRAQRSGSASISTHVADQAVGEPSSVGSGGSKYSSSFGKIRRQSSMRRSGSLELPAAKQAKPGERGSDELLDFVKMLEEKQELNVKKLYGTTTDISSSLVRFQSMKSNNDTLSEDLSMSYSLEPTHAPQVRYRSNSHSPIPSISPSVQYTSIPMRLSQSRNVSQTELASRKNSAERLKTLISSRTGSFSESRRQSNAGQEDILEDEDDEAEEILLSKSHLSNPTGTRLQSMSPQSLKSISSYNRAAVPFKPVSNFSCPTTMATPAHAKLHKASISSSPDNQSGLVKKDHEHSTMTGGDDDDDLLFFMSDMNLSSQ</sequence>
<feature type="chain" id="PRO_0000157964" description="Autophagy-related protein 13">
    <location>
        <begin position="1"/>
        <end position="659"/>
    </location>
</feature>
<feature type="region of interest" description="Disordered" evidence="3">
    <location>
        <begin position="260"/>
        <end position="280"/>
    </location>
</feature>
<feature type="region of interest" description="Disordered" evidence="3">
    <location>
        <begin position="295"/>
        <end position="320"/>
    </location>
</feature>
<feature type="region of interest" description="Disordered" evidence="3">
    <location>
        <begin position="353"/>
        <end position="409"/>
    </location>
</feature>
<feature type="region of interest" description="Disordered" evidence="3">
    <location>
        <begin position="525"/>
        <end position="551"/>
    </location>
</feature>
<feature type="region of interest" description="Disordered" evidence="3">
    <location>
        <begin position="560"/>
        <end position="579"/>
    </location>
</feature>
<feature type="region of interest" description="Disordered" evidence="3">
    <location>
        <begin position="612"/>
        <end position="644"/>
    </location>
</feature>
<feature type="compositionally biased region" description="Low complexity" evidence="3">
    <location>
        <begin position="364"/>
        <end position="382"/>
    </location>
</feature>
<feature type="compositionally biased region" description="Polar residues" evidence="3">
    <location>
        <begin position="525"/>
        <end position="542"/>
    </location>
</feature>
<feature type="compositionally biased region" description="Polar residues" evidence="3">
    <location>
        <begin position="562"/>
        <end position="579"/>
    </location>
</feature>
<feature type="compositionally biased region" description="Polar residues" evidence="3">
    <location>
        <begin position="617"/>
        <end position="627"/>
    </location>
</feature>
<keyword id="KW-0072">Autophagy</keyword>
<keyword id="KW-0963">Cytoplasm</keyword>
<keyword id="KW-0653">Protein transport</keyword>
<keyword id="KW-1185">Reference proteome</keyword>
<keyword id="KW-0813">Transport</keyword>
<organism>
    <name type="scientific">Eremothecium gossypii (strain ATCC 10895 / CBS 109.51 / FGSC 9923 / NRRL Y-1056)</name>
    <name type="common">Yeast</name>
    <name type="synonym">Ashbya gossypii</name>
    <dbReference type="NCBI Taxonomy" id="284811"/>
    <lineage>
        <taxon>Eukaryota</taxon>
        <taxon>Fungi</taxon>
        <taxon>Dikarya</taxon>
        <taxon>Ascomycota</taxon>
        <taxon>Saccharomycotina</taxon>
        <taxon>Saccharomycetes</taxon>
        <taxon>Saccharomycetales</taxon>
        <taxon>Saccharomycetaceae</taxon>
        <taxon>Eremothecium</taxon>
    </lineage>
</organism>
<gene>
    <name type="primary">ATG13</name>
    <name type="ordered locus">AEL277C</name>
</gene>
<evidence type="ECO:0000250" key="1"/>
<evidence type="ECO:0000250" key="2">
    <source>
        <dbReference type="UniProtKB" id="Q06628"/>
    </source>
</evidence>
<evidence type="ECO:0000256" key="3">
    <source>
        <dbReference type="SAM" id="MobiDB-lite"/>
    </source>
</evidence>
<evidence type="ECO:0000305" key="4"/>
<accession>Q758N2</accession>
<comment type="function">
    <text evidence="1">Activates the ATG1 kinase in a nutritional condition dependent manner through the TOR pathway, leading to autophagy. Also involved in cytoplasm to vacuole transport (Cvt) and more specifically in Cvt vesicle formation. Seems to play a role in the switching machinery regulating the conversion between the Cvt pathway and autophagy. Finally, ATG13 is also required for glycogen storage during stationary phase (By similarity).</text>
</comment>
<comment type="subunit">
    <text evidence="1">Interacts with ATG1 to form the ATG1-ATG13 kinase complex.</text>
</comment>
<comment type="subcellular location">
    <subcellularLocation>
        <location evidence="2">Cytoplasm</location>
    </subcellularLocation>
    <subcellularLocation>
        <location evidence="2">Preautophagosomal structure</location>
    </subcellularLocation>
</comment>
<comment type="similarity">
    <text evidence="4">Belongs to the ATG13 family. Fungi subfamily.</text>
</comment>
<dbReference type="EMBL" id="AE016818">
    <property type="protein sequence ID" value="AAS52407.1"/>
    <property type="molecule type" value="Genomic_DNA"/>
</dbReference>
<dbReference type="RefSeq" id="NP_984583.1">
    <property type="nucleotide sequence ID" value="NM_209936.2"/>
</dbReference>
<dbReference type="SMR" id="Q758N2"/>
<dbReference type="FunCoup" id="Q758N2">
    <property type="interactions" value="46"/>
</dbReference>
<dbReference type="STRING" id="284811.Q758N2"/>
<dbReference type="EnsemblFungi" id="AAS52407">
    <property type="protein sequence ID" value="AAS52407"/>
    <property type="gene ID" value="AGOS_AEL277C"/>
</dbReference>
<dbReference type="GeneID" id="4620763"/>
<dbReference type="KEGG" id="ago:AGOS_AEL277C"/>
<dbReference type="eggNOG" id="KOG4573">
    <property type="taxonomic scope" value="Eukaryota"/>
</dbReference>
<dbReference type="HOGENOM" id="CLU_411076_0_0_1"/>
<dbReference type="InParanoid" id="Q758N2"/>
<dbReference type="OMA" id="WNVCKGT"/>
<dbReference type="OrthoDB" id="70161at2759"/>
<dbReference type="Proteomes" id="UP000000591">
    <property type="component" value="Chromosome V"/>
</dbReference>
<dbReference type="GO" id="GO:1990316">
    <property type="term" value="C:Atg1/ULK1 kinase complex"/>
    <property type="evidence" value="ECO:0000318"/>
    <property type="project" value="GO_Central"/>
</dbReference>
<dbReference type="GO" id="GO:0005776">
    <property type="term" value="C:autophagosome"/>
    <property type="evidence" value="ECO:0000318"/>
    <property type="project" value="GO_Central"/>
</dbReference>
<dbReference type="GO" id="GO:0005829">
    <property type="term" value="C:cytosol"/>
    <property type="evidence" value="ECO:0000318"/>
    <property type="project" value="GO_Central"/>
</dbReference>
<dbReference type="GO" id="GO:0070772">
    <property type="term" value="C:PAS complex"/>
    <property type="evidence" value="ECO:0007669"/>
    <property type="project" value="EnsemblFungi"/>
</dbReference>
<dbReference type="GO" id="GO:0000407">
    <property type="term" value="C:phagophore assembly site"/>
    <property type="evidence" value="ECO:0000318"/>
    <property type="project" value="GO_Central"/>
</dbReference>
<dbReference type="GO" id="GO:0120095">
    <property type="term" value="C:vacuole-isolation membrane contact site"/>
    <property type="evidence" value="ECO:0007669"/>
    <property type="project" value="EnsemblFungi"/>
</dbReference>
<dbReference type="GO" id="GO:0070016">
    <property type="term" value="F:armadillo repeat domain binding"/>
    <property type="evidence" value="ECO:0007669"/>
    <property type="project" value="EnsemblFungi"/>
</dbReference>
<dbReference type="GO" id="GO:0008289">
    <property type="term" value="F:lipid binding"/>
    <property type="evidence" value="ECO:0007669"/>
    <property type="project" value="EnsemblFungi"/>
</dbReference>
<dbReference type="GO" id="GO:0019887">
    <property type="term" value="F:protein kinase regulator activity"/>
    <property type="evidence" value="ECO:0000318"/>
    <property type="project" value="GO_Central"/>
</dbReference>
<dbReference type="GO" id="GO:0006995">
    <property type="term" value="P:cellular response to nitrogen starvation"/>
    <property type="evidence" value="ECO:0007669"/>
    <property type="project" value="EnsemblFungi"/>
</dbReference>
<dbReference type="GO" id="GO:0071255">
    <property type="term" value="P:Cvt vesicle assembly"/>
    <property type="evidence" value="ECO:0007669"/>
    <property type="project" value="EnsemblFungi"/>
</dbReference>
<dbReference type="GO" id="GO:0000423">
    <property type="term" value="P:mitophagy"/>
    <property type="evidence" value="ECO:0000318"/>
    <property type="project" value="GO_Central"/>
</dbReference>
<dbReference type="GO" id="GO:0034727">
    <property type="term" value="P:piecemeal microautophagy of the nucleus"/>
    <property type="evidence" value="ECO:0000318"/>
    <property type="project" value="GO_Central"/>
</dbReference>
<dbReference type="GO" id="GO:0010508">
    <property type="term" value="P:positive regulation of autophagy"/>
    <property type="evidence" value="ECO:0007669"/>
    <property type="project" value="EnsemblFungi"/>
</dbReference>
<dbReference type="GO" id="GO:0034497">
    <property type="term" value="P:protein localization to phagophore assembly site"/>
    <property type="evidence" value="ECO:0000318"/>
    <property type="project" value="GO_Central"/>
</dbReference>
<dbReference type="GO" id="GO:0071211">
    <property type="term" value="P:protein targeting to vacuole involved in autophagy"/>
    <property type="evidence" value="ECO:0007669"/>
    <property type="project" value="EnsemblFungi"/>
</dbReference>
<dbReference type="GO" id="GO:0060341">
    <property type="term" value="P:regulation of cellular localization"/>
    <property type="evidence" value="ECO:0007669"/>
    <property type="project" value="EnsemblFungi"/>
</dbReference>
<dbReference type="FunFam" id="3.30.900.10:FF:000013">
    <property type="entry name" value="Autophagy-related protein 13"/>
    <property type="match status" value="1"/>
</dbReference>
<dbReference type="Gene3D" id="6.10.140.1900">
    <property type="match status" value="1"/>
</dbReference>
<dbReference type="Gene3D" id="3.30.900.10">
    <property type="entry name" value="HORMA domain"/>
    <property type="match status" value="1"/>
</dbReference>
<dbReference type="InterPro" id="IPR040182">
    <property type="entry name" value="ATG13"/>
</dbReference>
<dbReference type="InterPro" id="IPR018731">
    <property type="entry name" value="Atg13_N"/>
</dbReference>
<dbReference type="InterPro" id="IPR036570">
    <property type="entry name" value="HORMA_dom_sf"/>
</dbReference>
<dbReference type="PANTHER" id="PTHR13430">
    <property type="match status" value="1"/>
</dbReference>
<dbReference type="PANTHER" id="PTHR13430:SF4">
    <property type="entry name" value="AUTOPHAGY-RELATED PROTEIN 13"/>
    <property type="match status" value="1"/>
</dbReference>
<dbReference type="Pfam" id="PF10033">
    <property type="entry name" value="ATG13"/>
    <property type="match status" value="1"/>
</dbReference>
<protein>
    <recommendedName>
        <fullName>Autophagy-related protein 13</fullName>
    </recommendedName>
</protein>
<name>ATG13_EREGS</name>
<proteinExistence type="inferred from homology"/>